<gene>
    <name type="primary">LPR2</name>
    <name type="ordered locus">At1g71040</name>
    <name type="ORF">F23N20.3</name>
</gene>
<accession>Q949X9</accession>
<accession>Q8W4N2</accession>
<accession>Q9C9A4</accession>
<evidence type="ECO:0000250" key="1">
    <source>
        <dbReference type="UniProtKB" id="P37064"/>
    </source>
</evidence>
<evidence type="ECO:0000255" key="2"/>
<evidence type="ECO:0000269" key="3">
    <source>
    </source>
</evidence>
<evidence type="ECO:0000269" key="4">
    <source>
    </source>
</evidence>
<evidence type="ECO:0000305" key="5"/>
<evidence type="ECO:0000305" key="6">
    <source>
    </source>
</evidence>
<organism>
    <name type="scientific">Arabidopsis thaliana</name>
    <name type="common">Mouse-ear cress</name>
    <dbReference type="NCBI Taxonomy" id="3702"/>
    <lineage>
        <taxon>Eukaryota</taxon>
        <taxon>Viridiplantae</taxon>
        <taxon>Streptophyta</taxon>
        <taxon>Embryophyta</taxon>
        <taxon>Tracheophyta</taxon>
        <taxon>Spermatophyta</taxon>
        <taxon>Magnoliopsida</taxon>
        <taxon>eudicotyledons</taxon>
        <taxon>Gunneridae</taxon>
        <taxon>Pentapetalae</taxon>
        <taxon>rosids</taxon>
        <taxon>malvids</taxon>
        <taxon>Brassicales</taxon>
        <taxon>Brassicaceae</taxon>
        <taxon>Camelineae</taxon>
        <taxon>Arabidopsis</taxon>
    </lineage>
</organism>
<keyword id="KW-0186">Copper</keyword>
<keyword id="KW-0256">Endoplasmic reticulum</keyword>
<keyword id="KW-0325">Glycoprotein</keyword>
<keyword id="KW-0472">Membrane</keyword>
<keyword id="KW-0479">Metal-binding</keyword>
<keyword id="KW-0560">Oxidoreductase</keyword>
<keyword id="KW-1185">Reference proteome</keyword>
<keyword id="KW-0732">Signal</keyword>
<name>LPR2_ARATH</name>
<comment type="function">
    <text evidence="3 4">Multicopper oxidase that may be involved in copper homeostasis and oxidative stress response, and that is necessary for root growth inhibition by low phosphate conditions. Functions together with LPR1 and PDR2 in a common pathway that adjusts root meristem activity to phosphate availability.</text>
</comment>
<comment type="cofactor">
    <cofactor evidence="1">
        <name>Cu cation</name>
        <dbReference type="ChEBI" id="CHEBI:23378"/>
    </cofactor>
    <text evidence="1">Binds 4 Cu cations per monomer. The Cu cations are bound as 3 distinct Cu centers known as type 1 or blue, type 2 or normal, and type 3 or coupled binuclear.</text>
</comment>
<comment type="subcellular location">
    <subcellularLocation>
        <location evidence="6">Endoplasmic reticulum membrane</location>
        <topology evidence="6">Peripheral membrane protein</topology>
    </subcellularLocation>
    <text evidence="6">Associates with PDR2 at the ER membrane.</text>
</comment>
<comment type="disruption phenotype">
    <text evidence="3 4">No visible phenotype under normal growth conditions, but mutant plants have reduced inhibition of primary root growth in low inorganic phosphate conditions.</text>
</comment>
<comment type="similarity">
    <text evidence="5">Belongs to the multicopper oxidase family.</text>
</comment>
<comment type="sequence caution" evidence="5">
    <conflict type="erroneous gene model prediction">
        <sequence resource="EMBL-CDS" id="AAG51692"/>
    </conflict>
</comment>
<reference key="1">
    <citation type="journal article" date="2000" name="Nature">
        <title>Sequence and analysis of chromosome 1 of the plant Arabidopsis thaliana.</title>
        <authorList>
            <person name="Theologis A."/>
            <person name="Ecker J.R."/>
            <person name="Palm C.J."/>
            <person name="Federspiel N.A."/>
            <person name="Kaul S."/>
            <person name="White O."/>
            <person name="Alonso J."/>
            <person name="Altafi H."/>
            <person name="Araujo R."/>
            <person name="Bowman C.L."/>
            <person name="Brooks S.Y."/>
            <person name="Buehler E."/>
            <person name="Chan A."/>
            <person name="Chao Q."/>
            <person name="Chen H."/>
            <person name="Cheuk R.F."/>
            <person name="Chin C.W."/>
            <person name="Chung M.K."/>
            <person name="Conn L."/>
            <person name="Conway A.B."/>
            <person name="Conway A.R."/>
            <person name="Creasy T.H."/>
            <person name="Dewar K."/>
            <person name="Dunn P."/>
            <person name="Etgu P."/>
            <person name="Feldblyum T.V."/>
            <person name="Feng J.-D."/>
            <person name="Fong B."/>
            <person name="Fujii C.Y."/>
            <person name="Gill J.E."/>
            <person name="Goldsmith A.D."/>
            <person name="Haas B."/>
            <person name="Hansen N.F."/>
            <person name="Hughes B."/>
            <person name="Huizar L."/>
            <person name="Hunter J.L."/>
            <person name="Jenkins J."/>
            <person name="Johnson-Hopson C."/>
            <person name="Khan S."/>
            <person name="Khaykin E."/>
            <person name="Kim C.J."/>
            <person name="Koo H.L."/>
            <person name="Kremenetskaia I."/>
            <person name="Kurtz D.B."/>
            <person name="Kwan A."/>
            <person name="Lam B."/>
            <person name="Langin-Hooper S."/>
            <person name="Lee A."/>
            <person name="Lee J.M."/>
            <person name="Lenz C.A."/>
            <person name="Li J.H."/>
            <person name="Li Y.-P."/>
            <person name="Lin X."/>
            <person name="Liu S.X."/>
            <person name="Liu Z.A."/>
            <person name="Luros J.S."/>
            <person name="Maiti R."/>
            <person name="Marziali A."/>
            <person name="Militscher J."/>
            <person name="Miranda M."/>
            <person name="Nguyen M."/>
            <person name="Nierman W.C."/>
            <person name="Osborne B.I."/>
            <person name="Pai G."/>
            <person name="Peterson J."/>
            <person name="Pham P.K."/>
            <person name="Rizzo M."/>
            <person name="Rooney T."/>
            <person name="Rowley D."/>
            <person name="Sakano H."/>
            <person name="Salzberg S.L."/>
            <person name="Schwartz J.R."/>
            <person name="Shinn P."/>
            <person name="Southwick A.M."/>
            <person name="Sun H."/>
            <person name="Tallon L.J."/>
            <person name="Tambunga G."/>
            <person name="Toriumi M.J."/>
            <person name="Town C.D."/>
            <person name="Utterback T."/>
            <person name="Van Aken S."/>
            <person name="Vaysberg M."/>
            <person name="Vysotskaia V.S."/>
            <person name="Walker M."/>
            <person name="Wu D."/>
            <person name="Yu G."/>
            <person name="Fraser C.M."/>
            <person name="Venter J.C."/>
            <person name="Davis R.W."/>
        </authorList>
    </citation>
    <scope>NUCLEOTIDE SEQUENCE [LARGE SCALE GENOMIC DNA]</scope>
    <source>
        <strain>cv. Columbia</strain>
    </source>
</reference>
<reference key="2">
    <citation type="journal article" date="2017" name="Plant J.">
        <title>Araport11: a complete reannotation of the Arabidopsis thaliana reference genome.</title>
        <authorList>
            <person name="Cheng C.Y."/>
            <person name="Krishnakumar V."/>
            <person name="Chan A.P."/>
            <person name="Thibaud-Nissen F."/>
            <person name="Schobel S."/>
            <person name="Town C.D."/>
        </authorList>
    </citation>
    <scope>GENOME REANNOTATION</scope>
    <source>
        <strain>cv. Columbia</strain>
    </source>
</reference>
<reference key="3">
    <citation type="journal article" date="2003" name="Science">
        <title>Empirical analysis of transcriptional activity in the Arabidopsis genome.</title>
        <authorList>
            <person name="Yamada K."/>
            <person name="Lim J."/>
            <person name="Dale J.M."/>
            <person name="Chen H."/>
            <person name="Shinn P."/>
            <person name="Palm C.J."/>
            <person name="Southwick A.M."/>
            <person name="Wu H.C."/>
            <person name="Kim C.J."/>
            <person name="Nguyen M."/>
            <person name="Pham P.K."/>
            <person name="Cheuk R.F."/>
            <person name="Karlin-Newmann G."/>
            <person name="Liu S.X."/>
            <person name="Lam B."/>
            <person name="Sakano H."/>
            <person name="Wu T."/>
            <person name="Yu G."/>
            <person name="Miranda M."/>
            <person name="Quach H.L."/>
            <person name="Tripp M."/>
            <person name="Chang C.H."/>
            <person name="Lee J.M."/>
            <person name="Toriumi M.J."/>
            <person name="Chan M.M."/>
            <person name="Tang C.C."/>
            <person name="Onodera C.S."/>
            <person name="Deng J.M."/>
            <person name="Akiyama K."/>
            <person name="Ansari Y."/>
            <person name="Arakawa T."/>
            <person name="Banh J."/>
            <person name="Banno F."/>
            <person name="Bowser L."/>
            <person name="Brooks S.Y."/>
            <person name="Carninci P."/>
            <person name="Chao Q."/>
            <person name="Choy N."/>
            <person name="Enju A."/>
            <person name="Goldsmith A.D."/>
            <person name="Gurjal M."/>
            <person name="Hansen N.F."/>
            <person name="Hayashizaki Y."/>
            <person name="Johnson-Hopson C."/>
            <person name="Hsuan V.W."/>
            <person name="Iida K."/>
            <person name="Karnes M."/>
            <person name="Khan S."/>
            <person name="Koesema E."/>
            <person name="Ishida J."/>
            <person name="Jiang P.X."/>
            <person name="Jones T."/>
            <person name="Kawai J."/>
            <person name="Kamiya A."/>
            <person name="Meyers C."/>
            <person name="Nakajima M."/>
            <person name="Narusaka M."/>
            <person name="Seki M."/>
            <person name="Sakurai T."/>
            <person name="Satou M."/>
            <person name="Tamse R."/>
            <person name="Vaysberg M."/>
            <person name="Wallender E.K."/>
            <person name="Wong C."/>
            <person name="Yamamura Y."/>
            <person name="Yuan S."/>
            <person name="Shinozaki K."/>
            <person name="Davis R.W."/>
            <person name="Theologis A."/>
            <person name="Ecker J.R."/>
        </authorList>
    </citation>
    <scope>NUCLEOTIDE SEQUENCE [LARGE SCALE MRNA]</scope>
    <source>
        <strain>cv. Columbia</strain>
    </source>
</reference>
<reference key="4">
    <citation type="journal article" date="2007" name="Nat. Genet.">
        <title>Root tip contact with low-phosphate media reprograms plant root architecture.</title>
        <authorList>
            <person name="Svistoonoff S."/>
            <person name="Creff A."/>
            <person name="Reymond M."/>
            <person name="Sigoillot-Claude C."/>
            <person name="Ricaud L."/>
            <person name="Blanchet A."/>
            <person name="Nussaume L."/>
            <person name="Desnos T."/>
        </authorList>
    </citation>
    <scope>FUNCTION</scope>
    <scope>DISRUPTION PHENOTYPE</scope>
    <source>
        <strain>cv. Columbia</strain>
        <strain>cv. Sha</strain>
    </source>
</reference>
<reference key="5">
    <citation type="journal article" date="2009" name="Proc. Natl. Acad. Sci. U.S.A.">
        <title>ER-resident proteins PDR2 and LPR1 mediate the developmental response of root meristems to phosphate availability.</title>
        <authorList>
            <person name="Ticconi C.A."/>
            <person name="Lucero R.D."/>
            <person name="Sakhonwasee S."/>
            <person name="Adamson A.W."/>
            <person name="Creff A."/>
            <person name="Nussaume L."/>
            <person name="Desnos T."/>
            <person name="Abel S."/>
        </authorList>
    </citation>
    <scope>FUNCTION</scope>
    <scope>SUBCELLULAR LOCATION</scope>
    <scope>DISRUPTION PHENOTYPE</scope>
</reference>
<feature type="signal peptide" evidence="2">
    <location>
        <begin position="1"/>
        <end position="25"/>
    </location>
</feature>
<feature type="chain" id="PRO_0000429268" description="Multicopper oxidase LPR2">
    <location>
        <begin position="26"/>
        <end position="581"/>
    </location>
</feature>
<feature type="domain" description="Plastocyanin-like">
    <location>
        <begin position="274"/>
        <end position="361"/>
    </location>
</feature>
<feature type="binding site" description="type 2 copper site" evidence="1">
    <location>
        <position position="150"/>
    </location>
    <ligand>
        <name>Cu cation</name>
        <dbReference type="ChEBI" id="CHEBI:23378"/>
        <label>1</label>
    </ligand>
</feature>
<feature type="binding site" description="type 3 copper site" evidence="1">
    <location>
        <position position="152"/>
    </location>
    <ligand>
        <name>Cu cation</name>
        <dbReference type="ChEBI" id="CHEBI:23378"/>
        <label>2</label>
    </ligand>
</feature>
<feature type="binding site" description="type 3 copper site" evidence="1">
    <location>
        <position position="198"/>
    </location>
    <ligand>
        <name>Cu cation</name>
        <dbReference type="ChEBI" id="CHEBI:23378"/>
        <label>2</label>
    </ligand>
</feature>
<feature type="binding site" description="type 3 copper site" evidence="1">
    <location>
        <position position="200"/>
    </location>
    <ligand>
        <name>Cu cation</name>
        <dbReference type="ChEBI" id="CHEBI:23378"/>
        <label>3</label>
    </ligand>
</feature>
<feature type="binding site" description="type 1 copper site" evidence="1">
    <location>
        <position position="466"/>
    </location>
    <ligand>
        <name>Cu cation</name>
        <dbReference type="ChEBI" id="CHEBI:23378"/>
        <label>4</label>
    </ligand>
</feature>
<feature type="binding site" description="type 2 copper site" evidence="1">
    <location>
        <position position="469"/>
    </location>
    <ligand>
        <name>Cu cation</name>
        <dbReference type="ChEBI" id="CHEBI:23378"/>
        <label>1</label>
    </ligand>
</feature>
<feature type="binding site" description="type 3 copper site" evidence="1">
    <location>
        <position position="471"/>
    </location>
    <ligand>
        <name>Cu cation</name>
        <dbReference type="ChEBI" id="CHEBI:23378"/>
        <label>3</label>
    </ligand>
</feature>
<feature type="binding site" description="type 3 copper site" evidence="1">
    <location>
        <position position="562"/>
    </location>
    <ligand>
        <name>Cu cation</name>
        <dbReference type="ChEBI" id="CHEBI:23378"/>
        <label>3</label>
    </ligand>
</feature>
<feature type="binding site" description="type 1 copper site" evidence="1">
    <location>
        <position position="563"/>
    </location>
    <ligand>
        <name>Cu cation</name>
        <dbReference type="ChEBI" id="CHEBI:23378"/>
        <label>4</label>
    </ligand>
</feature>
<feature type="binding site" description="type 3 copper site" evidence="1">
    <location>
        <position position="564"/>
    </location>
    <ligand>
        <name>Cu cation</name>
        <dbReference type="ChEBI" id="CHEBI:23378"/>
        <label>2</label>
    </ligand>
</feature>
<feature type="binding site" description="type 1 copper site" evidence="1">
    <location>
        <position position="568"/>
    </location>
    <ligand>
        <name>Cu cation</name>
        <dbReference type="ChEBI" id="CHEBI:23378"/>
        <label>4</label>
    </ligand>
</feature>
<feature type="binding site" description="type 1 copper site" evidence="1">
    <location>
        <position position="573"/>
    </location>
    <ligand>
        <name>Cu cation</name>
        <dbReference type="ChEBI" id="CHEBI:23378"/>
        <label>4</label>
    </ligand>
</feature>
<feature type="glycosylation site" description="N-linked (GlcNAc...) asparagine" evidence="2">
    <location>
        <position position="256"/>
    </location>
</feature>
<feature type="glycosylation site" description="N-linked (GlcNAc...) asparagine" evidence="2">
    <location>
        <position position="300"/>
    </location>
</feature>
<feature type="glycosylation site" description="N-linked (GlcNAc...) asparagine" evidence="2">
    <location>
        <position position="460"/>
    </location>
</feature>
<feature type="glycosylation site" description="N-linked (GlcNAc...) asparagine" evidence="2">
    <location>
        <position position="511"/>
    </location>
</feature>
<feature type="glycosylation site" description="N-linked (GlcNAc...) asparagine" evidence="2">
    <location>
        <position position="546"/>
    </location>
</feature>
<feature type="sequence conflict" description="In Ref. 3; AAL32542." evidence="5" ref="3">
    <original>N</original>
    <variation>K</variation>
    <location>
        <position position="436"/>
    </location>
</feature>
<dbReference type="EC" id="1.-.-.-"/>
<dbReference type="EMBL" id="AC016972">
    <property type="protein sequence ID" value="AAG51692.1"/>
    <property type="status" value="ALT_SEQ"/>
    <property type="molecule type" value="Genomic_DNA"/>
</dbReference>
<dbReference type="EMBL" id="CP002684">
    <property type="protein sequence ID" value="AEE35155.1"/>
    <property type="molecule type" value="Genomic_DNA"/>
</dbReference>
<dbReference type="EMBL" id="AY050818">
    <property type="protein sequence ID" value="AAK92753.1"/>
    <property type="molecule type" value="mRNA"/>
</dbReference>
<dbReference type="EMBL" id="AY062464">
    <property type="protein sequence ID" value="AAL32542.1"/>
    <property type="molecule type" value="mRNA"/>
</dbReference>
<dbReference type="EMBL" id="AY091420">
    <property type="protein sequence ID" value="AAM14359.1"/>
    <property type="molecule type" value="mRNA"/>
</dbReference>
<dbReference type="PIR" id="G96734">
    <property type="entry name" value="G96734"/>
</dbReference>
<dbReference type="RefSeq" id="NP_565008.1">
    <property type="nucleotide sequence ID" value="NM_105773.3"/>
</dbReference>
<dbReference type="SMR" id="Q949X9"/>
<dbReference type="FunCoup" id="Q949X9">
    <property type="interactions" value="3"/>
</dbReference>
<dbReference type="STRING" id="3702.Q949X9"/>
<dbReference type="GlyCosmos" id="Q949X9">
    <property type="glycosylation" value="5 sites, No reported glycans"/>
</dbReference>
<dbReference type="GlyGen" id="Q949X9">
    <property type="glycosylation" value="6 sites"/>
</dbReference>
<dbReference type="PaxDb" id="3702-AT1G71040.1"/>
<dbReference type="ProteomicsDB" id="238608"/>
<dbReference type="EnsemblPlants" id="AT1G71040.1">
    <property type="protein sequence ID" value="AT1G71040.1"/>
    <property type="gene ID" value="AT1G71040"/>
</dbReference>
<dbReference type="GeneID" id="843444"/>
<dbReference type="Gramene" id="AT1G71040.1">
    <property type="protein sequence ID" value="AT1G71040.1"/>
    <property type="gene ID" value="AT1G71040"/>
</dbReference>
<dbReference type="KEGG" id="ath:AT1G71040"/>
<dbReference type="Araport" id="AT1G71040"/>
<dbReference type="TAIR" id="AT1G71040">
    <property type="gene designation" value="LPR2"/>
</dbReference>
<dbReference type="eggNOG" id="ENOG502QR4X">
    <property type="taxonomic scope" value="Eukaryota"/>
</dbReference>
<dbReference type="HOGENOM" id="CLU_009100_4_2_1"/>
<dbReference type="InParanoid" id="Q949X9"/>
<dbReference type="OMA" id="YQLDVMS"/>
<dbReference type="PhylomeDB" id="Q949X9"/>
<dbReference type="PRO" id="PR:Q949X9"/>
<dbReference type="Proteomes" id="UP000006548">
    <property type="component" value="Chromosome 1"/>
</dbReference>
<dbReference type="ExpressionAtlas" id="Q949X9">
    <property type="expression patterns" value="baseline and differential"/>
</dbReference>
<dbReference type="GO" id="GO:0005789">
    <property type="term" value="C:endoplasmic reticulum membrane"/>
    <property type="evidence" value="ECO:0007669"/>
    <property type="project" value="UniProtKB-SubCell"/>
</dbReference>
<dbReference type="GO" id="GO:0005794">
    <property type="term" value="C:Golgi apparatus"/>
    <property type="evidence" value="ECO:0007005"/>
    <property type="project" value="TAIR"/>
</dbReference>
<dbReference type="GO" id="GO:0005739">
    <property type="term" value="C:mitochondrion"/>
    <property type="evidence" value="ECO:0007005"/>
    <property type="project" value="TAIR"/>
</dbReference>
<dbReference type="GO" id="GO:0005507">
    <property type="term" value="F:copper ion binding"/>
    <property type="evidence" value="ECO:0007669"/>
    <property type="project" value="InterPro"/>
</dbReference>
<dbReference type="GO" id="GO:0016491">
    <property type="term" value="F:oxidoreductase activity"/>
    <property type="evidence" value="ECO:0007669"/>
    <property type="project" value="UniProtKB-KW"/>
</dbReference>
<dbReference type="GO" id="GO:0016036">
    <property type="term" value="P:cellular response to phosphate starvation"/>
    <property type="evidence" value="ECO:0000315"/>
    <property type="project" value="TAIR"/>
</dbReference>
<dbReference type="GO" id="GO:0010073">
    <property type="term" value="P:meristem maintenance"/>
    <property type="evidence" value="ECO:0000316"/>
    <property type="project" value="TAIR"/>
</dbReference>
<dbReference type="CDD" id="cd13844">
    <property type="entry name" value="CuRO_1_BOD_CotA_like"/>
    <property type="match status" value="1"/>
</dbReference>
<dbReference type="CDD" id="cd13868">
    <property type="entry name" value="CuRO_2_CotA_like"/>
    <property type="match status" value="1"/>
</dbReference>
<dbReference type="CDD" id="cd13891">
    <property type="entry name" value="CuRO_3_CotA_like"/>
    <property type="match status" value="1"/>
</dbReference>
<dbReference type="FunFam" id="2.60.40.420:FF:000102">
    <property type="entry name" value="Multi-copper oxidase type I family protein"/>
    <property type="match status" value="1"/>
</dbReference>
<dbReference type="FunFam" id="2.60.40.420:FF:000081">
    <property type="entry name" value="Spore coat protein A"/>
    <property type="match status" value="1"/>
</dbReference>
<dbReference type="FunFam" id="2.60.40.420:FF:000087">
    <property type="entry name" value="Spore coat protein A"/>
    <property type="match status" value="1"/>
</dbReference>
<dbReference type="Gene3D" id="2.60.40.420">
    <property type="entry name" value="Cupredoxins - blue copper proteins"/>
    <property type="match status" value="3"/>
</dbReference>
<dbReference type="InterPro" id="IPR001117">
    <property type="entry name" value="Cu-oxidase_2nd"/>
</dbReference>
<dbReference type="InterPro" id="IPR011706">
    <property type="entry name" value="Cu-oxidase_C"/>
</dbReference>
<dbReference type="InterPro" id="IPR008972">
    <property type="entry name" value="Cupredoxin"/>
</dbReference>
<dbReference type="InterPro" id="IPR052152">
    <property type="entry name" value="LPR1/LPR2"/>
</dbReference>
<dbReference type="PANTHER" id="PTHR48461">
    <property type="entry name" value="MULTICOPPER OXIDASE LPR1-LIKE"/>
    <property type="match status" value="1"/>
</dbReference>
<dbReference type="PANTHER" id="PTHR48461:SF1">
    <property type="entry name" value="MULTICOPPER OXIDASE LPR1-LIKE"/>
    <property type="match status" value="1"/>
</dbReference>
<dbReference type="Pfam" id="PF00394">
    <property type="entry name" value="Cu-oxidase"/>
    <property type="match status" value="1"/>
</dbReference>
<dbReference type="Pfam" id="PF07731">
    <property type="entry name" value="Cu-oxidase_2"/>
    <property type="match status" value="1"/>
</dbReference>
<dbReference type="SUPFAM" id="SSF49503">
    <property type="entry name" value="Cupredoxins"/>
    <property type="match status" value="3"/>
</dbReference>
<protein>
    <recommendedName>
        <fullName>Multicopper oxidase LPR2</fullName>
        <ecNumber>1.-.-.-</ecNumber>
    </recommendedName>
    <alternativeName>
        <fullName>Protein LOW PHOSPHATE ROOT 2</fullName>
    </alternativeName>
</protein>
<proteinExistence type="evidence at transcript level"/>
<sequence length="581" mass="66165">MEPSRRRMTRDMLLLIVTMAWLVTGDEGGIKQEERLFNLGKLEMFVDKLPHIPTLHGYHFVNGFLKPKSLHIGMFFKKWKFHRDLPATPVFAYGTSKRSATVPGPTIEAVYGVDTYVTWRNHLPLHHILPWDPTISPAIPKHGGIPTVVHLHGGIHEPTSDGNADSWFTAGFKETGSKWTKKTTHYVNKQQPGNMWYHDHAAGLTRVNLLAGLLGSYILRHSSVESPLRLPTGREFDRPLVIFDRSFRKDGSIYMNATGNNPTIHPQWQPEYFGDAIIVNGKAWPRLTVRRRKYRFRITNASNARFFRFFFSNGLDFIVVGSDSAYLAKPVSTKSVLLAPSEIVDVLVDFSKSTSKTAILANNAPYPYPSGDPVTEENSKVMKFIINYKSEVDTSIIPKKLIEYPPAHVSTSTRTRYIAMFEYVSSIDEPTHLYINGLPYNAPVTETPKIGTSEVWEVINLTEDNHPLHIHLGLFKVLEQTALVKSEEFIECMTKRNDAVKCEISKYARGNKTAVTVHERGWKNVFKMMPGHVTKILVRFSYIHSNESYSFDATQEPGYVYHCHILDHEDNMMMRPFAMVL</sequence>